<accession>A7MPG5</accession>
<protein>
    <recommendedName>
        <fullName evidence="1">Large ribosomal subunit protein uL6</fullName>
    </recommendedName>
    <alternativeName>
        <fullName evidence="2">50S ribosomal protein L6</fullName>
    </alternativeName>
</protein>
<gene>
    <name evidence="1" type="primary">rplF</name>
    <name type="ordered locus">ESA_00021</name>
</gene>
<sequence length="177" mass="18888">MSRVAKAPVVIPAGVDVKLNGQVITIKGKNGELTRTLNDAVEVKHADNALTFGPRDGYADGWAQAGTARALLNSMVIGVTEGFTKKLQLVGVGYRAAIKGNVVNLSLGFSHPVDHQLPAGITAECPSQTEIVLKGADKQLIGQVAADLRAYRRPEPYKGKGVRYADEVVRTKEAKKK</sequence>
<name>RL6_CROS8</name>
<proteinExistence type="inferred from homology"/>
<reference key="1">
    <citation type="journal article" date="2010" name="PLoS ONE">
        <title>Genome sequence of Cronobacter sakazakii BAA-894 and comparative genomic hybridization analysis with other Cronobacter species.</title>
        <authorList>
            <person name="Kucerova E."/>
            <person name="Clifton S.W."/>
            <person name="Xia X.Q."/>
            <person name="Long F."/>
            <person name="Porwollik S."/>
            <person name="Fulton L."/>
            <person name="Fronick C."/>
            <person name="Minx P."/>
            <person name="Kyung K."/>
            <person name="Warren W."/>
            <person name="Fulton R."/>
            <person name="Feng D."/>
            <person name="Wollam A."/>
            <person name="Shah N."/>
            <person name="Bhonagiri V."/>
            <person name="Nash W.E."/>
            <person name="Hallsworth-Pepin K."/>
            <person name="Wilson R.K."/>
            <person name="McClelland M."/>
            <person name="Forsythe S.J."/>
        </authorList>
    </citation>
    <scope>NUCLEOTIDE SEQUENCE [LARGE SCALE GENOMIC DNA]</scope>
    <source>
        <strain>ATCC BAA-894</strain>
    </source>
</reference>
<organism>
    <name type="scientific">Cronobacter sakazakii (strain ATCC BAA-894)</name>
    <name type="common">Enterobacter sakazakii</name>
    <dbReference type="NCBI Taxonomy" id="290339"/>
    <lineage>
        <taxon>Bacteria</taxon>
        <taxon>Pseudomonadati</taxon>
        <taxon>Pseudomonadota</taxon>
        <taxon>Gammaproteobacteria</taxon>
        <taxon>Enterobacterales</taxon>
        <taxon>Enterobacteriaceae</taxon>
        <taxon>Cronobacter</taxon>
    </lineage>
</organism>
<evidence type="ECO:0000255" key="1">
    <source>
        <dbReference type="HAMAP-Rule" id="MF_01365"/>
    </source>
</evidence>
<evidence type="ECO:0000305" key="2"/>
<keyword id="KW-1185">Reference proteome</keyword>
<keyword id="KW-0687">Ribonucleoprotein</keyword>
<keyword id="KW-0689">Ribosomal protein</keyword>
<keyword id="KW-0694">RNA-binding</keyword>
<keyword id="KW-0699">rRNA-binding</keyword>
<dbReference type="EMBL" id="CP000783">
    <property type="protein sequence ID" value="ABU75330.1"/>
    <property type="molecule type" value="Genomic_DNA"/>
</dbReference>
<dbReference type="RefSeq" id="WP_004388616.1">
    <property type="nucleotide sequence ID" value="NC_009778.1"/>
</dbReference>
<dbReference type="SMR" id="A7MPG5"/>
<dbReference type="GeneID" id="92804605"/>
<dbReference type="KEGG" id="esa:ESA_00021"/>
<dbReference type="HOGENOM" id="CLU_065464_1_2_6"/>
<dbReference type="Proteomes" id="UP000000260">
    <property type="component" value="Chromosome"/>
</dbReference>
<dbReference type="GO" id="GO:0022625">
    <property type="term" value="C:cytosolic large ribosomal subunit"/>
    <property type="evidence" value="ECO:0007669"/>
    <property type="project" value="TreeGrafter"/>
</dbReference>
<dbReference type="GO" id="GO:0019843">
    <property type="term" value="F:rRNA binding"/>
    <property type="evidence" value="ECO:0007669"/>
    <property type="project" value="UniProtKB-UniRule"/>
</dbReference>
<dbReference type="GO" id="GO:0003735">
    <property type="term" value="F:structural constituent of ribosome"/>
    <property type="evidence" value="ECO:0007669"/>
    <property type="project" value="InterPro"/>
</dbReference>
<dbReference type="GO" id="GO:0002181">
    <property type="term" value="P:cytoplasmic translation"/>
    <property type="evidence" value="ECO:0007669"/>
    <property type="project" value="TreeGrafter"/>
</dbReference>
<dbReference type="FunFam" id="3.90.930.12:FF:000001">
    <property type="entry name" value="50S ribosomal protein L6"/>
    <property type="match status" value="1"/>
</dbReference>
<dbReference type="FunFam" id="3.90.930.12:FF:000002">
    <property type="entry name" value="50S ribosomal protein L6"/>
    <property type="match status" value="1"/>
</dbReference>
<dbReference type="Gene3D" id="3.90.930.12">
    <property type="entry name" value="Ribosomal protein L6, alpha-beta domain"/>
    <property type="match status" value="2"/>
</dbReference>
<dbReference type="HAMAP" id="MF_01365_B">
    <property type="entry name" value="Ribosomal_uL6_B"/>
    <property type="match status" value="1"/>
</dbReference>
<dbReference type="InterPro" id="IPR000702">
    <property type="entry name" value="Ribosomal_uL6-like"/>
</dbReference>
<dbReference type="InterPro" id="IPR036789">
    <property type="entry name" value="Ribosomal_uL6-like_a/b-dom_sf"/>
</dbReference>
<dbReference type="InterPro" id="IPR020040">
    <property type="entry name" value="Ribosomal_uL6_a/b-dom"/>
</dbReference>
<dbReference type="InterPro" id="IPR019906">
    <property type="entry name" value="Ribosomal_uL6_bac-type"/>
</dbReference>
<dbReference type="InterPro" id="IPR002358">
    <property type="entry name" value="Ribosomal_uL6_CS"/>
</dbReference>
<dbReference type="NCBIfam" id="TIGR03654">
    <property type="entry name" value="L6_bact"/>
    <property type="match status" value="1"/>
</dbReference>
<dbReference type="PANTHER" id="PTHR11655">
    <property type="entry name" value="60S/50S RIBOSOMAL PROTEIN L6/L9"/>
    <property type="match status" value="1"/>
</dbReference>
<dbReference type="PANTHER" id="PTHR11655:SF14">
    <property type="entry name" value="LARGE RIBOSOMAL SUBUNIT PROTEIN UL6M"/>
    <property type="match status" value="1"/>
</dbReference>
<dbReference type="Pfam" id="PF00347">
    <property type="entry name" value="Ribosomal_L6"/>
    <property type="match status" value="2"/>
</dbReference>
<dbReference type="PIRSF" id="PIRSF002162">
    <property type="entry name" value="Ribosomal_L6"/>
    <property type="match status" value="1"/>
</dbReference>
<dbReference type="PRINTS" id="PR00059">
    <property type="entry name" value="RIBOSOMALL6"/>
</dbReference>
<dbReference type="SUPFAM" id="SSF56053">
    <property type="entry name" value="Ribosomal protein L6"/>
    <property type="match status" value="2"/>
</dbReference>
<dbReference type="PROSITE" id="PS00525">
    <property type="entry name" value="RIBOSOMAL_L6_1"/>
    <property type="match status" value="1"/>
</dbReference>
<feature type="chain" id="PRO_1000055228" description="Large ribosomal subunit protein uL6">
    <location>
        <begin position="1"/>
        <end position="177"/>
    </location>
</feature>
<comment type="function">
    <text evidence="1">This protein binds to the 23S rRNA, and is important in its secondary structure. It is located near the subunit interface in the base of the L7/L12 stalk, and near the tRNA binding site of the peptidyltransferase center.</text>
</comment>
<comment type="subunit">
    <text evidence="1">Part of the 50S ribosomal subunit.</text>
</comment>
<comment type="similarity">
    <text evidence="1">Belongs to the universal ribosomal protein uL6 family.</text>
</comment>